<reference key="1">
    <citation type="journal article" date="2000" name="Nature">
        <title>Complete genome sequence of Pseudomonas aeruginosa PAO1, an opportunistic pathogen.</title>
        <authorList>
            <person name="Stover C.K."/>
            <person name="Pham X.-Q.T."/>
            <person name="Erwin A.L."/>
            <person name="Mizoguchi S.D."/>
            <person name="Warrener P."/>
            <person name="Hickey M.J."/>
            <person name="Brinkman F.S.L."/>
            <person name="Hufnagle W.O."/>
            <person name="Kowalik D.J."/>
            <person name="Lagrou M."/>
            <person name="Garber R.L."/>
            <person name="Goltry L."/>
            <person name="Tolentino E."/>
            <person name="Westbrock-Wadman S."/>
            <person name="Yuan Y."/>
            <person name="Brody L.L."/>
            <person name="Coulter S.N."/>
            <person name="Folger K.R."/>
            <person name="Kas A."/>
            <person name="Larbig K."/>
            <person name="Lim R.M."/>
            <person name="Smith K.A."/>
            <person name="Spencer D.H."/>
            <person name="Wong G.K.-S."/>
            <person name="Wu Z."/>
            <person name="Paulsen I.T."/>
            <person name="Reizer J."/>
            <person name="Saier M.H. Jr."/>
            <person name="Hancock R.E.W."/>
            <person name="Lory S."/>
            <person name="Olson M.V."/>
        </authorList>
    </citation>
    <scope>NUCLEOTIDE SEQUENCE [LARGE SCALE GENOMIC DNA]</scope>
    <source>
        <strain>ATCC 15692 / DSM 22644 / CIP 104116 / JCM 14847 / LMG 12228 / 1C / PRS 101 / PAO1</strain>
    </source>
</reference>
<reference key="2">
    <citation type="journal article" date="2010" name="J. Biol. Chem.">
        <title>Gap filling activities of Pseudomonas DNA ligase D (LigD) polymerase and functional interactions of LigD with the DNA end-binding Ku protein.</title>
        <authorList>
            <person name="Zhu H."/>
            <person name="Shuman S."/>
        </authorList>
    </citation>
    <scope>FUNCTION</scope>
    <scope>SUBUNIT</scope>
    <scope>DNA-BINDING</scope>
</reference>
<accession>Q9I1W5</accession>
<keyword id="KW-0227">DNA damage</keyword>
<keyword id="KW-0233">DNA recombination</keyword>
<keyword id="KW-0234">DNA repair</keyword>
<keyword id="KW-0238">DNA-binding</keyword>
<keyword id="KW-1185">Reference proteome</keyword>
<proteinExistence type="evidence at protein level"/>
<gene>
    <name evidence="1" type="primary">ku</name>
    <name type="ordered locus">PA2150</name>
</gene>
<dbReference type="EMBL" id="AE004091">
    <property type="protein sequence ID" value="AAG05538.1"/>
    <property type="molecule type" value="Genomic_DNA"/>
</dbReference>
<dbReference type="PIR" id="E83376">
    <property type="entry name" value="E83376"/>
</dbReference>
<dbReference type="RefSeq" id="NP_250840.1">
    <property type="nucleotide sequence ID" value="NC_002516.2"/>
</dbReference>
<dbReference type="RefSeq" id="WP_003113644.1">
    <property type="nucleotide sequence ID" value="NZ_QZGE01000014.1"/>
</dbReference>
<dbReference type="SMR" id="Q9I1W5"/>
<dbReference type="STRING" id="208964.PA2150"/>
<dbReference type="PaxDb" id="208964-PA2150"/>
<dbReference type="GeneID" id="881375"/>
<dbReference type="KEGG" id="pae:PA2150"/>
<dbReference type="PATRIC" id="fig|208964.12.peg.2249"/>
<dbReference type="PseudoCAP" id="PA2150"/>
<dbReference type="HOGENOM" id="CLU_048975_2_0_6"/>
<dbReference type="InParanoid" id="Q9I1W5"/>
<dbReference type="OrthoDB" id="9795084at2"/>
<dbReference type="PhylomeDB" id="Q9I1W5"/>
<dbReference type="BioCyc" id="PAER208964:G1FZ6-2190-MONOMER"/>
<dbReference type="Proteomes" id="UP000002438">
    <property type="component" value="Chromosome"/>
</dbReference>
<dbReference type="GO" id="GO:0003690">
    <property type="term" value="F:double-stranded DNA binding"/>
    <property type="evidence" value="ECO:0000314"/>
    <property type="project" value="UniProtKB"/>
</dbReference>
<dbReference type="GO" id="GO:0006310">
    <property type="term" value="P:DNA recombination"/>
    <property type="evidence" value="ECO:0007669"/>
    <property type="project" value="UniProtKB-KW"/>
</dbReference>
<dbReference type="GO" id="GO:0006303">
    <property type="term" value="P:double-strand break repair via nonhomologous end joining"/>
    <property type="evidence" value="ECO:0007669"/>
    <property type="project" value="UniProtKB-UniRule"/>
</dbReference>
<dbReference type="GO" id="GO:0051351">
    <property type="term" value="P:positive regulation of ligase activity"/>
    <property type="evidence" value="ECO:0000314"/>
    <property type="project" value="UniProtKB"/>
</dbReference>
<dbReference type="CDD" id="cd00789">
    <property type="entry name" value="KU_like"/>
    <property type="match status" value="1"/>
</dbReference>
<dbReference type="FunFam" id="2.40.290.10:FF:000004">
    <property type="entry name" value="Non-homologous end joining protein Ku"/>
    <property type="match status" value="1"/>
</dbReference>
<dbReference type="Gene3D" id="2.40.290.10">
    <property type="match status" value="1"/>
</dbReference>
<dbReference type="HAMAP" id="MF_01875">
    <property type="entry name" value="Prokaryotic_Ku"/>
    <property type="match status" value="1"/>
</dbReference>
<dbReference type="InterPro" id="IPR006164">
    <property type="entry name" value="Ku70/Ku80_beta-barrel_dom"/>
</dbReference>
<dbReference type="InterPro" id="IPR009187">
    <property type="entry name" value="Prok_Ku"/>
</dbReference>
<dbReference type="InterPro" id="IPR016194">
    <property type="entry name" value="SPOC-like_C_dom_sf"/>
</dbReference>
<dbReference type="NCBIfam" id="TIGR02772">
    <property type="entry name" value="Ku_bact"/>
    <property type="match status" value="1"/>
</dbReference>
<dbReference type="PANTHER" id="PTHR41251">
    <property type="entry name" value="NON-HOMOLOGOUS END JOINING PROTEIN KU"/>
    <property type="match status" value="1"/>
</dbReference>
<dbReference type="PANTHER" id="PTHR41251:SF1">
    <property type="entry name" value="NON-HOMOLOGOUS END JOINING PROTEIN KU"/>
    <property type="match status" value="1"/>
</dbReference>
<dbReference type="Pfam" id="PF02735">
    <property type="entry name" value="Ku"/>
    <property type="match status" value="1"/>
</dbReference>
<dbReference type="PIRSF" id="PIRSF006493">
    <property type="entry name" value="Prok_Ku"/>
    <property type="match status" value="1"/>
</dbReference>
<dbReference type="SMART" id="SM00559">
    <property type="entry name" value="Ku78"/>
    <property type="match status" value="1"/>
</dbReference>
<dbReference type="SUPFAM" id="SSF100939">
    <property type="entry name" value="SPOC domain-like"/>
    <property type="match status" value="1"/>
</dbReference>
<sequence>MARAIWKGAISFGLVHIPVSLSAATSSQGIDFDWLDQRSMEPVGYKRVNKVTGKEIERENIVKGVEYEKGRYVVLSEEEIRAAHPKSTQTIEIFAFVDSQEIPLQHFDTPYYLVPDRRGGKVYALLRETLERTGKVALANVVLHTRQHLALLRPLQDALVLITLRWPSQVRSLDGLELDESVTEAKLDKRELEMAKRLVEDMASHWEPDEYKDSFSDKIMKLVEEKAAKGQLHAVEEEEEVAGKGADIIDLTDLLKRSLRSRAGGGKDKGSEKAGADAKGRAKSGASRSRRKA</sequence>
<protein>
    <recommendedName>
        <fullName evidence="1">Non-homologous end joining protein Ku</fullName>
    </recommendedName>
</protein>
<evidence type="ECO:0000255" key="1">
    <source>
        <dbReference type="HAMAP-Rule" id="MF_01875"/>
    </source>
</evidence>
<evidence type="ECO:0000256" key="2">
    <source>
        <dbReference type="SAM" id="MobiDB-lite"/>
    </source>
</evidence>
<evidence type="ECO:0000269" key="3">
    <source>
    </source>
</evidence>
<feature type="chain" id="PRO_0000425946" description="Non-homologous end joining protein Ku">
    <location>
        <begin position="1"/>
        <end position="293"/>
    </location>
</feature>
<feature type="domain" description="Ku" evidence="1">
    <location>
        <begin position="10"/>
        <end position="195"/>
    </location>
</feature>
<feature type="region of interest" description="Required for dimerization">
    <location>
        <begin position="216"/>
        <end position="229"/>
    </location>
</feature>
<feature type="region of interest" description="Disordered" evidence="2">
    <location>
        <begin position="260"/>
        <end position="293"/>
    </location>
</feature>
<feature type="compositionally biased region" description="Basic and acidic residues" evidence="2">
    <location>
        <begin position="265"/>
        <end position="280"/>
    </location>
</feature>
<organism>
    <name type="scientific">Pseudomonas aeruginosa (strain ATCC 15692 / DSM 22644 / CIP 104116 / JCM 14847 / LMG 12228 / 1C / PRS 101 / PAO1)</name>
    <dbReference type="NCBI Taxonomy" id="208964"/>
    <lineage>
        <taxon>Bacteria</taxon>
        <taxon>Pseudomonadati</taxon>
        <taxon>Pseudomonadota</taxon>
        <taxon>Gammaproteobacteria</taxon>
        <taxon>Pseudomonadales</taxon>
        <taxon>Pseudomonadaceae</taxon>
        <taxon>Pseudomonas</taxon>
    </lineage>
</organism>
<comment type="function">
    <text evidence="3">With LigD forms a non-homologous end joining (NHEJ) DNA repair enzyme, which repairs dsDNA breaks with reduced fidelity. Stimulates rNTP addition to DSB and end joining (ligation) of linear DNA by LigD, on 3'-overhangs and probably also 5'-overhangs and blunt dsDNA breaks. Binds both ends of linear dsDNA protecting it from exonuclease activity.</text>
</comment>
<comment type="subunit">
    <text evidence="3">Homodimer, may form higher-order multimers on DNA. Non-dimerized protein does not stimulate LigD ligase activity. Probably interacts with LigD.</text>
</comment>
<comment type="similarity">
    <text evidence="1">Belongs to the prokaryotic Ku family.</text>
</comment>
<name>KU_PSEAE</name>